<name>YIDC1_LACLA</name>
<accession>Q9CJ72</accession>
<proteinExistence type="inferred from homology"/>
<comment type="function">
    <text evidence="1">Required for the insertion and/or proper folding and/or complex formation of integral membrane proteins into the membrane. Involved in integration of membrane proteins that insert both dependently and independently of the Sec translocase complex, as well as at least some lipoproteins.</text>
</comment>
<comment type="subcellular location">
    <subcellularLocation>
        <location evidence="1">Cell membrane</location>
        <topology evidence="1">Multi-pass membrane protein</topology>
    </subcellularLocation>
</comment>
<comment type="similarity">
    <text evidence="1">Belongs to the OXA1/ALB3/YidC family. Type 2 subfamily.</text>
</comment>
<protein>
    <recommendedName>
        <fullName evidence="1">Membrane protein insertase YidC 1</fullName>
    </recommendedName>
    <alternativeName>
        <fullName evidence="1">Foldase YidC 1</fullName>
    </alternativeName>
    <alternativeName>
        <fullName evidence="1">Membrane integrase YidC 1</fullName>
    </alternativeName>
    <alternativeName>
        <fullName evidence="1">Membrane protein YidC 1</fullName>
    </alternativeName>
</protein>
<dbReference type="EMBL" id="AE005176">
    <property type="protein sequence ID" value="AAK04227.1"/>
    <property type="molecule type" value="Genomic_DNA"/>
</dbReference>
<dbReference type="PIR" id="A86641">
    <property type="entry name" value="A86641"/>
</dbReference>
<dbReference type="RefSeq" id="NP_266285.1">
    <property type="nucleotide sequence ID" value="NC_002662.1"/>
</dbReference>
<dbReference type="RefSeq" id="WP_010905140.1">
    <property type="nucleotide sequence ID" value="NC_002662.1"/>
</dbReference>
<dbReference type="SMR" id="Q9CJ72"/>
<dbReference type="PaxDb" id="272623-L131778"/>
<dbReference type="DNASU" id="1113735"/>
<dbReference type="EnsemblBacteria" id="AAK04227">
    <property type="protein sequence ID" value="AAK04227"/>
    <property type="gene ID" value="L131778"/>
</dbReference>
<dbReference type="KEGG" id="lla:L131778"/>
<dbReference type="PATRIC" id="fig|272623.7.peg.142"/>
<dbReference type="eggNOG" id="COG0706">
    <property type="taxonomic scope" value="Bacteria"/>
</dbReference>
<dbReference type="HOGENOM" id="CLU_036138_5_0_9"/>
<dbReference type="OrthoDB" id="9780552at2"/>
<dbReference type="Proteomes" id="UP000002196">
    <property type="component" value="Chromosome"/>
</dbReference>
<dbReference type="GO" id="GO:0005886">
    <property type="term" value="C:plasma membrane"/>
    <property type="evidence" value="ECO:0007669"/>
    <property type="project" value="UniProtKB-SubCell"/>
</dbReference>
<dbReference type="GO" id="GO:0032977">
    <property type="term" value="F:membrane insertase activity"/>
    <property type="evidence" value="ECO:0007669"/>
    <property type="project" value="InterPro"/>
</dbReference>
<dbReference type="GO" id="GO:0051205">
    <property type="term" value="P:protein insertion into membrane"/>
    <property type="evidence" value="ECO:0007669"/>
    <property type="project" value="TreeGrafter"/>
</dbReference>
<dbReference type="GO" id="GO:0015031">
    <property type="term" value="P:protein transport"/>
    <property type="evidence" value="ECO:0007669"/>
    <property type="project" value="UniProtKB-KW"/>
</dbReference>
<dbReference type="CDD" id="cd20070">
    <property type="entry name" value="5TM_YidC_Alb3"/>
    <property type="match status" value="1"/>
</dbReference>
<dbReference type="HAMAP" id="MF_01811">
    <property type="entry name" value="YidC_type2"/>
    <property type="match status" value="1"/>
</dbReference>
<dbReference type="InterPro" id="IPR001708">
    <property type="entry name" value="YidC/ALB3/OXA1/COX18"/>
</dbReference>
<dbReference type="InterPro" id="IPR028055">
    <property type="entry name" value="YidC/Oxa/ALB_C"/>
</dbReference>
<dbReference type="InterPro" id="IPR023060">
    <property type="entry name" value="YidC/YidC1/YidC2_Firmicutes"/>
</dbReference>
<dbReference type="InterPro" id="IPR047196">
    <property type="entry name" value="YidC_ALB_C"/>
</dbReference>
<dbReference type="NCBIfam" id="TIGR03592">
    <property type="entry name" value="yidC_oxa1_cterm"/>
    <property type="match status" value="1"/>
</dbReference>
<dbReference type="PANTHER" id="PTHR12428:SF65">
    <property type="entry name" value="CYTOCHROME C OXIDASE ASSEMBLY PROTEIN COX18, MITOCHONDRIAL"/>
    <property type="match status" value="1"/>
</dbReference>
<dbReference type="PANTHER" id="PTHR12428">
    <property type="entry name" value="OXA1"/>
    <property type="match status" value="1"/>
</dbReference>
<dbReference type="Pfam" id="PF02096">
    <property type="entry name" value="60KD_IMP"/>
    <property type="match status" value="1"/>
</dbReference>
<dbReference type="PRINTS" id="PR00701">
    <property type="entry name" value="60KDINNERMP"/>
</dbReference>
<dbReference type="PROSITE" id="PS51257">
    <property type="entry name" value="PROKAR_LIPOPROTEIN"/>
    <property type="match status" value="1"/>
</dbReference>
<keyword id="KW-1003">Cell membrane</keyword>
<keyword id="KW-0143">Chaperone</keyword>
<keyword id="KW-0449">Lipoprotein</keyword>
<keyword id="KW-0472">Membrane</keyword>
<keyword id="KW-0564">Palmitate</keyword>
<keyword id="KW-0653">Protein transport</keyword>
<keyword id="KW-1185">Reference proteome</keyword>
<keyword id="KW-0732">Signal</keyword>
<keyword id="KW-0812">Transmembrane</keyword>
<keyword id="KW-1133">Transmembrane helix</keyword>
<keyword id="KW-0813">Transport</keyword>
<organism>
    <name type="scientific">Lactococcus lactis subsp. lactis (strain IL1403)</name>
    <name type="common">Streptococcus lactis</name>
    <dbReference type="NCBI Taxonomy" id="272623"/>
    <lineage>
        <taxon>Bacteria</taxon>
        <taxon>Bacillati</taxon>
        <taxon>Bacillota</taxon>
        <taxon>Bacilli</taxon>
        <taxon>Lactobacillales</taxon>
        <taxon>Streptococcaceae</taxon>
        <taxon>Lactococcus</taxon>
    </lineage>
</organism>
<gene>
    <name evidence="1" type="primary">yidC1</name>
    <name type="ordered locus">LL0129</name>
    <name type="ORF">L131778</name>
</gene>
<feature type="signal peptide" evidence="1">
    <location>
        <begin position="1"/>
        <end position="20"/>
    </location>
</feature>
<feature type="chain" id="PRO_0000020381" description="Membrane protein insertase YidC 1">
    <location>
        <begin position="21"/>
        <end position="269"/>
    </location>
</feature>
<feature type="transmembrane region" description="Helical" evidence="1">
    <location>
        <begin position="45"/>
        <end position="65"/>
    </location>
</feature>
<feature type="transmembrane region" description="Helical" evidence="1">
    <location>
        <begin position="124"/>
        <end position="144"/>
    </location>
</feature>
<feature type="transmembrane region" description="Helical" evidence="1">
    <location>
        <begin position="165"/>
        <end position="185"/>
    </location>
</feature>
<feature type="transmembrane region" description="Helical" evidence="1">
    <location>
        <begin position="203"/>
        <end position="223"/>
    </location>
</feature>
<feature type="lipid moiety-binding region" description="N-palmitoyl cysteine" evidence="1">
    <location>
        <position position="21"/>
    </location>
</feature>
<feature type="lipid moiety-binding region" description="S-diacylglycerol cysteine" evidence="1">
    <location>
        <position position="21"/>
    </location>
</feature>
<evidence type="ECO:0000255" key="1">
    <source>
        <dbReference type="HAMAP-Rule" id="MF_01811"/>
    </source>
</evidence>
<reference key="1">
    <citation type="journal article" date="2001" name="Genome Res.">
        <title>The complete genome sequence of the lactic acid bacterium Lactococcus lactis ssp. lactis IL1403.</title>
        <authorList>
            <person name="Bolotin A."/>
            <person name="Wincker P."/>
            <person name="Mauger S."/>
            <person name="Jaillon O."/>
            <person name="Malarme K."/>
            <person name="Weissenbach J."/>
            <person name="Ehrlich S.D."/>
            <person name="Sorokin A."/>
        </authorList>
    </citation>
    <scope>NUCLEOTIDE SEQUENCE [LARGE SCALE GENOMIC DNA]</scope>
    <source>
        <strain>IL1403</strain>
    </source>
</reference>
<sequence length="269" mass="30294">MKKKFSLIAMAGAALLLLTACGTTAVTSSSTNLWDQIVYGFAQVIRFLSFGGLTGVGIILFTIVIRAALLPLMNIQIKSSQRMQEIQPEIKKIQAKYPSKDMESRRLMNEEIQKLYAENKVNPYMGCLPLVVQMPVLWALYQALSRVDFLKHGTFLWFEIGAKDPTFILPILAAVFTFLSSYLMMKSAPERNAMTTSMTYIMPIFILIMGVNFAAGIALYWVISNAFQVFQTMLLANPYKIIAAREAKVQVEKDKIKAREKALKKARKK</sequence>